<gene>
    <name evidence="1" type="primary">fliT</name>
</gene>
<sequence length="120" mass="13775">MENLSPLLIEYQGLLKLIRNIKAMALNGLWDDVVEQEIVYIQSIERISQINVPANIPSTVQLQFRQLLQDILDTESQVKELLQNRMQELAVLIQQSQNQKSINNTYAEFSDDILPGKPQP</sequence>
<keyword id="KW-1005">Bacterial flagellum biogenesis</keyword>
<keyword id="KW-0143">Chaperone</keyword>
<keyword id="KW-0963">Cytoplasm</keyword>
<keyword id="KW-0678">Repressor</keyword>
<keyword id="KW-0804">Transcription</keyword>
<keyword id="KW-0805">Transcription regulation</keyword>
<reference key="1">
    <citation type="submission" date="2002-02" db="EMBL/GenBank/DDBJ databases">
        <title>Flagellin genes from Erwinia chrysanthemi 3937.</title>
        <authorList>
            <person name="Shevchik V.E."/>
        </authorList>
    </citation>
    <scope>NUCLEOTIDE SEQUENCE [GENOMIC DNA]</scope>
    <source>
        <strain>3937</strain>
    </source>
</reference>
<evidence type="ECO:0000255" key="1">
    <source>
        <dbReference type="HAMAP-Rule" id="MF_01180"/>
    </source>
</evidence>
<organism>
    <name type="scientific">Dickeya chrysanthemi</name>
    <name type="common">Pectobacterium chrysanthemi</name>
    <name type="synonym">Erwinia chrysanthemi</name>
    <dbReference type="NCBI Taxonomy" id="556"/>
    <lineage>
        <taxon>Bacteria</taxon>
        <taxon>Pseudomonadati</taxon>
        <taxon>Pseudomonadota</taxon>
        <taxon>Gammaproteobacteria</taxon>
        <taxon>Enterobacterales</taxon>
        <taxon>Pectobacteriaceae</taxon>
        <taxon>Dickeya</taxon>
    </lineage>
</organism>
<name>FLIT_DICCH</name>
<accession>Q8RST2</accession>
<protein>
    <recommendedName>
        <fullName evidence="1">Flagellar protein FliT</fullName>
    </recommendedName>
</protein>
<comment type="function">
    <text evidence="1">Dual-function protein that regulates the transcription of class 2 flagellar operons and that also acts as an export chaperone for the filament-capping protein FliD. As a transcriptional regulator, acts as an anti-FlhDC factor; it directly binds FlhC, thus inhibiting the binding of the FlhC/FlhD complex to class 2 promoters, resulting in decreased expression of class 2 flagellar operons. As a chaperone, effects FliD transition to the membrane by preventing its premature polymerization, and by directing it to the export apparatus.</text>
</comment>
<comment type="subunit">
    <text evidence="1">Homodimer. Interacts with FliD and FlhC.</text>
</comment>
<comment type="subcellular location">
    <subcellularLocation>
        <location evidence="1">Cytoplasm</location>
        <location evidence="1">Cytosol</location>
    </subcellularLocation>
</comment>
<comment type="similarity">
    <text evidence="1">Belongs to the FliT family.</text>
</comment>
<proteinExistence type="inferred from homology"/>
<dbReference type="EMBL" id="AJ430202">
    <property type="protein sequence ID" value="CAD22873.1"/>
    <property type="molecule type" value="Genomic_DNA"/>
</dbReference>
<dbReference type="SMR" id="Q8RST2"/>
<dbReference type="GO" id="GO:0005829">
    <property type="term" value="C:cytosol"/>
    <property type="evidence" value="ECO:0007669"/>
    <property type="project" value="UniProtKB-SubCell"/>
</dbReference>
<dbReference type="GO" id="GO:0044781">
    <property type="term" value="P:bacterial-type flagellum organization"/>
    <property type="evidence" value="ECO:0007669"/>
    <property type="project" value="UniProtKB-KW"/>
</dbReference>
<dbReference type="GO" id="GO:1902209">
    <property type="term" value="P:negative regulation of bacterial-type flagellum assembly"/>
    <property type="evidence" value="ECO:0007669"/>
    <property type="project" value="UniProtKB-UniRule"/>
</dbReference>
<dbReference type="GO" id="GO:0006457">
    <property type="term" value="P:protein folding"/>
    <property type="evidence" value="ECO:0007669"/>
    <property type="project" value="UniProtKB-UniRule"/>
</dbReference>
<dbReference type="Gene3D" id="1.20.58.380">
    <property type="entry name" value="Flagellar protein flit"/>
    <property type="match status" value="1"/>
</dbReference>
<dbReference type="HAMAP" id="MF_01180">
    <property type="entry name" value="FliT"/>
    <property type="match status" value="1"/>
</dbReference>
<dbReference type="InterPro" id="IPR008622">
    <property type="entry name" value="FliT"/>
</dbReference>
<dbReference type="Pfam" id="PF05400">
    <property type="entry name" value="FliT"/>
    <property type="match status" value="1"/>
</dbReference>
<feature type="chain" id="PRO_0000353876" description="Flagellar protein FliT">
    <location>
        <begin position="1"/>
        <end position="120"/>
    </location>
</feature>
<feature type="region of interest" description="Required for homodimerization" evidence="1">
    <location>
        <begin position="1"/>
        <end position="50"/>
    </location>
</feature>
<feature type="region of interest" description="FliD binding" evidence="1">
    <location>
        <begin position="60"/>
        <end position="98"/>
    </location>
</feature>